<dbReference type="EC" id="3.1.26.4" evidence="1"/>
<dbReference type="EMBL" id="AE016825">
    <property type="protein sequence ID" value="AAQ64053.1"/>
    <property type="molecule type" value="Genomic_DNA"/>
</dbReference>
<dbReference type="RefSeq" id="WP_011135758.1">
    <property type="nucleotide sequence ID" value="NC_005085.1"/>
</dbReference>
<dbReference type="SMR" id="Q7NPS3"/>
<dbReference type="STRING" id="243365.CV_2210"/>
<dbReference type="KEGG" id="cvi:CV_2210"/>
<dbReference type="eggNOG" id="COG0164">
    <property type="taxonomic scope" value="Bacteria"/>
</dbReference>
<dbReference type="HOGENOM" id="CLU_036532_3_2_4"/>
<dbReference type="OrthoDB" id="9803420at2"/>
<dbReference type="Proteomes" id="UP000001424">
    <property type="component" value="Chromosome"/>
</dbReference>
<dbReference type="GO" id="GO:0005737">
    <property type="term" value="C:cytoplasm"/>
    <property type="evidence" value="ECO:0007669"/>
    <property type="project" value="UniProtKB-SubCell"/>
</dbReference>
<dbReference type="GO" id="GO:0032299">
    <property type="term" value="C:ribonuclease H2 complex"/>
    <property type="evidence" value="ECO:0007669"/>
    <property type="project" value="TreeGrafter"/>
</dbReference>
<dbReference type="GO" id="GO:0030145">
    <property type="term" value="F:manganese ion binding"/>
    <property type="evidence" value="ECO:0007669"/>
    <property type="project" value="UniProtKB-UniRule"/>
</dbReference>
<dbReference type="GO" id="GO:0003723">
    <property type="term" value="F:RNA binding"/>
    <property type="evidence" value="ECO:0007669"/>
    <property type="project" value="InterPro"/>
</dbReference>
<dbReference type="GO" id="GO:0004523">
    <property type="term" value="F:RNA-DNA hybrid ribonuclease activity"/>
    <property type="evidence" value="ECO:0007669"/>
    <property type="project" value="UniProtKB-UniRule"/>
</dbReference>
<dbReference type="GO" id="GO:0043137">
    <property type="term" value="P:DNA replication, removal of RNA primer"/>
    <property type="evidence" value="ECO:0007669"/>
    <property type="project" value="TreeGrafter"/>
</dbReference>
<dbReference type="GO" id="GO:0006298">
    <property type="term" value="P:mismatch repair"/>
    <property type="evidence" value="ECO:0007669"/>
    <property type="project" value="TreeGrafter"/>
</dbReference>
<dbReference type="CDD" id="cd07182">
    <property type="entry name" value="RNase_HII_bacteria_HII_like"/>
    <property type="match status" value="1"/>
</dbReference>
<dbReference type="FunFam" id="3.30.420.10:FF:000006">
    <property type="entry name" value="Ribonuclease HII"/>
    <property type="match status" value="1"/>
</dbReference>
<dbReference type="Gene3D" id="3.30.420.10">
    <property type="entry name" value="Ribonuclease H-like superfamily/Ribonuclease H"/>
    <property type="match status" value="1"/>
</dbReference>
<dbReference type="HAMAP" id="MF_00052_B">
    <property type="entry name" value="RNase_HII_B"/>
    <property type="match status" value="1"/>
</dbReference>
<dbReference type="InterPro" id="IPR022898">
    <property type="entry name" value="RNase_HII"/>
</dbReference>
<dbReference type="InterPro" id="IPR001352">
    <property type="entry name" value="RNase_HII/HIII"/>
</dbReference>
<dbReference type="InterPro" id="IPR024567">
    <property type="entry name" value="RNase_HII/HIII_dom"/>
</dbReference>
<dbReference type="InterPro" id="IPR012337">
    <property type="entry name" value="RNaseH-like_sf"/>
</dbReference>
<dbReference type="InterPro" id="IPR036397">
    <property type="entry name" value="RNaseH_sf"/>
</dbReference>
<dbReference type="NCBIfam" id="NF000595">
    <property type="entry name" value="PRK00015.1-3"/>
    <property type="match status" value="1"/>
</dbReference>
<dbReference type="NCBIfam" id="NF000596">
    <property type="entry name" value="PRK00015.1-4"/>
    <property type="match status" value="1"/>
</dbReference>
<dbReference type="PANTHER" id="PTHR10954">
    <property type="entry name" value="RIBONUCLEASE H2 SUBUNIT A"/>
    <property type="match status" value="1"/>
</dbReference>
<dbReference type="PANTHER" id="PTHR10954:SF18">
    <property type="entry name" value="RIBONUCLEASE HII"/>
    <property type="match status" value="1"/>
</dbReference>
<dbReference type="Pfam" id="PF01351">
    <property type="entry name" value="RNase_HII"/>
    <property type="match status" value="1"/>
</dbReference>
<dbReference type="SUPFAM" id="SSF53098">
    <property type="entry name" value="Ribonuclease H-like"/>
    <property type="match status" value="1"/>
</dbReference>
<dbReference type="PROSITE" id="PS51975">
    <property type="entry name" value="RNASE_H_2"/>
    <property type="match status" value="1"/>
</dbReference>
<reference key="1">
    <citation type="journal article" date="2003" name="Proc. Natl. Acad. Sci. U.S.A.">
        <title>The complete genome sequence of Chromobacterium violaceum reveals remarkable and exploitable bacterial adaptability.</title>
        <authorList>
            <person name="Vasconcelos A.T.R."/>
            <person name="de Almeida D.F."/>
            <person name="Hungria M."/>
            <person name="Guimaraes C.T."/>
            <person name="Antonio R.V."/>
            <person name="Almeida F.C."/>
            <person name="de Almeida L.G.P."/>
            <person name="de Almeida R."/>
            <person name="Alves-Gomes J.A."/>
            <person name="Andrade E.M."/>
            <person name="Araripe J."/>
            <person name="de Araujo M.F.F."/>
            <person name="Astolfi-Filho S."/>
            <person name="Azevedo V."/>
            <person name="Baptista A.J."/>
            <person name="Bataus L.A.M."/>
            <person name="Batista J.S."/>
            <person name="Belo A."/>
            <person name="van den Berg C."/>
            <person name="Bogo M."/>
            <person name="Bonatto S."/>
            <person name="Bordignon J."/>
            <person name="Brigido M.M."/>
            <person name="Brito C.A."/>
            <person name="Brocchi M."/>
            <person name="Burity H.A."/>
            <person name="Camargo A.A."/>
            <person name="Cardoso D.D.P."/>
            <person name="Carneiro N.P."/>
            <person name="Carraro D.M."/>
            <person name="Carvalho C.M.B."/>
            <person name="Cascardo J.C.M."/>
            <person name="Cavada B.S."/>
            <person name="Chueire L.M.O."/>
            <person name="Creczynski-Pasa T.B."/>
            <person name="Cunha-Junior N.C."/>
            <person name="Fagundes N."/>
            <person name="Falcao C.L."/>
            <person name="Fantinatti F."/>
            <person name="Farias I.P."/>
            <person name="Felipe M.S.S."/>
            <person name="Ferrari L.P."/>
            <person name="Ferro J.A."/>
            <person name="Ferro M.I.T."/>
            <person name="Franco G.R."/>
            <person name="Freitas N.S.A."/>
            <person name="Furlan L.R."/>
            <person name="Gazzinelli R.T."/>
            <person name="Gomes E.A."/>
            <person name="Goncalves P.R."/>
            <person name="Grangeiro T.B."/>
            <person name="Grattapaglia D."/>
            <person name="Grisard E.C."/>
            <person name="Hanna E.S."/>
            <person name="Jardim S.N."/>
            <person name="Laurino J."/>
            <person name="Leoi L.C.T."/>
            <person name="Lima L.F.A."/>
            <person name="Loureiro M.F."/>
            <person name="Lyra M.C.C.P."/>
            <person name="Madeira H.M.F."/>
            <person name="Manfio G.P."/>
            <person name="Maranhao A.Q."/>
            <person name="Martins W.S."/>
            <person name="di Mauro S.M.Z."/>
            <person name="de Medeiros S.R.B."/>
            <person name="Meissner R.V."/>
            <person name="Moreira M.A.M."/>
            <person name="Nascimento F.F."/>
            <person name="Nicolas M.F."/>
            <person name="Oliveira J.G."/>
            <person name="Oliveira S.C."/>
            <person name="Paixao R.F.C."/>
            <person name="Parente J.A."/>
            <person name="Pedrosa F.O."/>
            <person name="Pena S.D.J."/>
            <person name="Pereira J.O."/>
            <person name="Pereira M."/>
            <person name="Pinto L.S.R.C."/>
            <person name="Pinto L.S."/>
            <person name="Porto J.I.R."/>
            <person name="Potrich D.P."/>
            <person name="Ramalho-Neto C.E."/>
            <person name="Reis A.M.M."/>
            <person name="Rigo L.U."/>
            <person name="Rondinelli E."/>
            <person name="Santos E.B.P."/>
            <person name="Santos F.R."/>
            <person name="Schneider M.P.C."/>
            <person name="Seuanez H.N."/>
            <person name="Silva A.M.R."/>
            <person name="da Silva A.L.C."/>
            <person name="Silva D.W."/>
            <person name="Silva R."/>
            <person name="Simoes I.C."/>
            <person name="Simon D."/>
            <person name="Soares C.M.A."/>
            <person name="Soares R.B.A."/>
            <person name="Souza E.M."/>
            <person name="Souza K.R.L."/>
            <person name="Souza R.C."/>
            <person name="Steffens M.B.R."/>
            <person name="Steindel M."/>
            <person name="Teixeira S.R."/>
            <person name="Urmenyi T."/>
            <person name="Vettore A."/>
            <person name="Wassem R."/>
            <person name="Zaha A."/>
            <person name="Simpson A.J.G."/>
        </authorList>
    </citation>
    <scope>NUCLEOTIDE SEQUENCE [LARGE SCALE GENOMIC DNA]</scope>
    <source>
        <strain>ATCC 12472 / DSM 30191 / JCM 1249 / CCUG 213 / NBRC 12614 / NCIMB 9131 / NCTC 9757 / MK</strain>
    </source>
</reference>
<name>RNH2_CHRVO</name>
<protein>
    <recommendedName>
        <fullName evidence="1">Ribonuclease HII</fullName>
        <shortName evidence="1">RNase HII</shortName>
        <ecNumber evidence="1">3.1.26.4</ecNumber>
    </recommendedName>
</protein>
<evidence type="ECO:0000255" key="1">
    <source>
        <dbReference type="HAMAP-Rule" id="MF_00052"/>
    </source>
</evidence>
<evidence type="ECO:0000255" key="2">
    <source>
        <dbReference type="PROSITE-ProRule" id="PRU01319"/>
    </source>
</evidence>
<feature type="chain" id="PRO_0000111563" description="Ribonuclease HII">
    <location>
        <begin position="1"/>
        <end position="198"/>
    </location>
</feature>
<feature type="domain" description="RNase H type-2" evidence="2">
    <location>
        <begin position="5"/>
        <end position="195"/>
    </location>
</feature>
<feature type="binding site" evidence="1">
    <location>
        <position position="11"/>
    </location>
    <ligand>
        <name>a divalent metal cation</name>
        <dbReference type="ChEBI" id="CHEBI:60240"/>
    </ligand>
</feature>
<feature type="binding site" evidence="1">
    <location>
        <position position="12"/>
    </location>
    <ligand>
        <name>a divalent metal cation</name>
        <dbReference type="ChEBI" id="CHEBI:60240"/>
    </ligand>
</feature>
<feature type="binding site" evidence="1">
    <location>
        <position position="103"/>
    </location>
    <ligand>
        <name>a divalent metal cation</name>
        <dbReference type="ChEBI" id="CHEBI:60240"/>
    </ligand>
</feature>
<proteinExistence type="inferred from homology"/>
<sequence>MPLKLRVAGVDEAGRGPLAGAVFAAAVILDPAKPIAGLADSKVLSEAQRDELAVLIKRDALAWCVASASVEEIDKLNILHATMLAMTRAVEGLPVRPDLAQIDGNRVPKHLPVPGEAIVKGDAKVAAISAASILAKTARDAELVALDALHPQYGFARHKGYPTAEHLAAIEAHGVLPAHRKTFGPVKAWLASHQGALF</sequence>
<keyword id="KW-0963">Cytoplasm</keyword>
<keyword id="KW-0255">Endonuclease</keyword>
<keyword id="KW-0378">Hydrolase</keyword>
<keyword id="KW-0464">Manganese</keyword>
<keyword id="KW-0479">Metal-binding</keyword>
<keyword id="KW-0540">Nuclease</keyword>
<keyword id="KW-1185">Reference proteome</keyword>
<organism>
    <name type="scientific">Chromobacterium violaceum (strain ATCC 12472 / DSM 30191 / JCM 1249 / CCUG 213 / NBRC 12614 / NCIMB 9131 / NCTC 9757 / MK)</name>
    <dbReference type="NCBI Taxonomy" id="243365"/>
    <lineage>
        <taxon>Bacteria</taxon>
        <taxon>Pseudomonadati</taxon>
        <taxon>Pseudomonadota</taxon>
        <taxon>Betaproteobacteria</taxon>
        <taxon>Neisseriales</taxon>
        <taxon>Chromobacteriaceae</taxon>
        <taxon>Chromobacterium</taxon>
    </lineage>
</organism>
<gene>
    <name evidence="1" type="primary">rnhB</name>
    <name type="ordered locus">CV_2210</name>
</gene>
<comment type="function">
    <text evidence="1">Endonuclease that specifically degrades the RNA of RNA-DNA hybrids.</text>
</comment>
<comment type="catalytic activity">
    <reaction evidence="1">
        <text>Endonucleolytic cleavage to 5'-phosphomonoester.</text>
        <dbReference type="EC" id="3.1.26.4"/>
    </reaction>
</comment>
<comment type="cofactor">
    <cofactor evidence="1">
        <name>Mn(2+)</name>
        <dbReference type="ChEBI" id="CHEBI:29035"/>
    </cofactor>
    <cofactor evidence="1">
        <name>Mg(2+)</name>
        <dbReference type="ChEBI" id="CHEBI:18420"/>
    </cofactor>
    <text evidence="1">Manganese or magnesium. Binds 1 divalent metal ion per monomer in the absence of substrate. May bind a second metal ion after substrate binding.</text>
</comment>
<comment type="subcellular location">
    <subcellularLocation>
        <location evidence="1">Cytoplasm</location>
    </subcellularLocation>
</comment>
<comment type="similarity">
    <text evidence="1">Belongs to the RNase HII family.</text>
</comment>
<accession>Q7NPS3</accession>